<organism>
    <name type="scientific">Caenorhabditis briggsae</name>
    <dbReference type="NCBI Taxonomy" id="6238"/>
    <lineage>
        <taxon>Eukaryota</taxon>
        <taxon>Metazoa</taxon>
        <taxon>Ecdysozoa</taxon>
        <taxon>Nematoda</taxon>
        <taxon>Chromadorea</taxon>
        <taxon>Rhabditida</taxon>
        <taxon>Rhabditina</taxon>
        <taxon>Rhabditomorpha</taxon>
        <taxon>Rhabditoidea</taxon>
        <taxon>Rhabditidae</taxon>
        <taxon>Peloderinae</taxon>
        <taxon>Caenorhabditis</taxon>
    </lineage>
</organism>
<reference evidence="4" key="1">
    <citation type="journal article" date="2003" name="PLoS Biol.">
        <title>The genome sequence of Caenorhabditis briggsae: a platform for comparative genomics.</title>
        <authorList>
            <person name="Stein L.D."/>
            <person name="Bao Z."/>
            <person name="Blasiar D."/>
            <person name="Blumenthal T."/>
            <person name="Brent M.R."/>
            <person name="Chen N."/>
            <person name="Chinwalla A."/>
            <person name="Clarke L."/>
            <person name="Clee C."/>
            <person name="Coghlan A."/>
            <person name="Coulson A."/>
            <person name="D'Eustachio P."/>
            <person name="Fitch D.H.A."/>
            <person name="Fulton L.A."/>
            <person name="Fulton R.E."/>
            <person name="Griffiths-Jones S."/>
            <person name="Harris T.W."/>
            <person name="Hillier L.W."/>
            <person name="Kamath R."/>
            <person name="Kuwabara P.E."/>
            <person name="Mardis E.R."/>
            <person name="Marra M.A."/>
            <person name="Miner T.L."/>
            <person name="Minx P."/>
            <person name="Mullikin J.C."/>
            <person name="Plumb R.W."/>
            <person name="Rogers J."/>
            <person name="Schein J.E."/>
            <person name="Sohrmann M."/>
            <person name="Spieth J."/>
            <person name="Stajich J.E."/>
            <person name="Wei C."/>
            <person name="Willey D."/>
            <person name="Wilson R.K."/>
            <person name="Durbin R.M."/>
            <person name="Waterston R.H."/>
        </authorList>
    </citation>
    <scope>NUCLEOTIDE SEQUENCE [LARGE SCALE GENOMIC DNA]</scope>
    <source>
        <strain evidence="4">AF16</strain>
    </source>
</reference>
<dbReference type="EMBL" id="HE600983">
    <property type="protein sequence ID" value="CAP32755.1"/>
    <property type="molecule type" value="Genomic_DNA"/>
</dbReference>
<dbReference type="SMR" id="A8XJD0"/>
<dbReference type="FunCoup" id="A8XJD0">
    <property type="interactions" value="91"/>
</dbReference>
<dbReference type="STRING" id="6238.A8XJD0"/>
<dbReference type="EnsemblMetazoa" id="CBG14125.1">
    <property type="protein sequence ID" value="CBG14125.1"/>
    <property type="gene ID" value="WBGene00034724"/>
</dbReference>
<dbReference type="KEGG" id="cbr:CBG_14125"/>
<dbReference type="CTD" id="8586312"/>
<dbReference type="WormBase" id="CBG14125">
    <property type="protein sequence ID" value="CBP09847"/>
    <property type="gene ID" value="WBGene00034724"/>
    <property type="gene designation" value="Cbr-ceh-30"/>
</dbReference>
<dbReference type="eggNOG" id="KOG0488">
    <property type="taxonomic scope" value="Eukaryota"/>
</dbReference>
<dbReference type="HOGENOM" id="CLU_102319_0_0_1"/>
<dbReference type="InParanoid" id="A8XJD0"/>
<dbReference type="OMA" id="SPYWANY"/>
<dbReference type="Proteomes" id="UP000008549">
    <property type="component" value="Unassembled WGS sequence"/>
</dbReference>
<dbReference type="GO" id="GO:0005634">
    <property type="term" value="C:nucleus"/>
    <property type="evidence" value="ECO:0000318"/>
    <property type="project" value="GO_Central"/>
</dbReference>
<dbReference type="GO" id="GO:0000981">
    <property type="term" value="F:DNA-binding transcription factor activity, RNA polymerase II-specific"/>
    <property type="evidence" value="ECO:0000318"/>
    <property type="project" value="GO_Central"/>
</dbReference>
<dbReference type="GO" id="GO:0000977">
    <property type="term" value="F:RNA polymerase II transcription regulatory region sequence-specific DNA binding"/>
    <property type="evidence" value="ECO:0000318"/>
    <property type="project" value="GO_Central"/>
</dbReference>
<dbReference type="GO" id="GO:0030154">
    <property type="term" value="P:cell differentiation"/>
    <property type="evidence" value="ECO:0007669"/>
    <property type="project" value="UniProtKB-KW"/>
</dbReference>
<dbReference type="GO" id="GO:0043066">
    <property type="term" value="P:negative regulation of apoptotic process"/>
    <property type="evidence" value="ECO:0007669"/>
    <property type="project" value="EnsemblMetazoa"/>
</dbReference>
<dbReference type="GO" id="GO:0007399">
    <property type="term" value="P:nervous system development"/>
    <property type="evidence" value="ECO:0007669"/>
    <property type="project" value="EnsemblMetazoa"/>
</dbReference>
<dbReference type="GO" id="GO:0006357">
    <property type="term" value="P:regulation of transcription by RNA polymerase II"/>
    <property type="evidence" value="ECO:0000318"/>
    <property type="project" value="GO_Central"/>
</dbReference>
<dbReference type="GO" id="GO:0007548">
    <property type="term" value="P:sex differentiation"/>
    <property type="evidence" value="ECO:0007669"/>
    <property type="project" value="UniProtKB-KW"/>
</dbReference>
<dbReference type="CDD" id="cd00086">
    <property type="entry name" value="homeodomain"/>
    <property type="match status" value="1"/>
</dbReference>
<dbReference type="Gene3D" id="1.10.10.60">
    <property type="entry name" value="Homeodomain-like"/>
    <property type="match status" value="1"/>
</dbReference>
<dbReference type="InterPro" id="IPR001356">
    <property type="entry name" value="HD"/>
</dbReference>
<dbReference type="InterPro" id="IPR020479">
    <property type="entry name" value="HD_metazoa"/>
</dbReference>
<dbReference type="InterPro" id="IPR017970">
    <property type="entry name" value="Homeobox_CS"/>
</dbReference>
<dbReference type="InterPro" id="IPR050848">
    <property type="entry name" value="Homeobox_TF"/>
</dbReference>
<dbReference type="InterPro" id="IPR009057">
    <property type="entry name" value="Homeodomain-like_sf"/>
</dbReference>
<dbReference type="InterPro" id="IPR000047">
    <property type="entry name" value="HTH_motif"/>
</dbReference>
<dbReference type="PANTHER" id="PTHR24333">
    <property type="entry name" value="HOMEO BOX HB9 LIKE A-RELATED"/>
    <property type="match status" value="1"/>
</dbReference>
<dbReference type="PANTHER" id="PTHR24333:SF5">
    <property type="entry name" value="VENT HOMEOBOX"/>
    <property type="match status" value="1"/>
</dbReference>
<dbReference type="Pfam" id="PF00046">
    <property type="entry name" value="Homeodomain"/>
    <property type="match status" value="1"/>
</dbReference>
<dbReference type="PRINTS" id="PR00024">
    <property type="entry name" value="HOMEOBOX"/>
</dbReference>
<dbReference type="PRINTS" id="PR00031">
    <property type="entry name" value="HTHREPRESSR"/>
</dbReference>
<dbReference type="SMART" id="SM00389">
    <property type="entry name" value="HOX"/>
    <property type="match status" value="1"/>
</dbReference>
<dbReference type="SUPFAM" id="SSF46689">
    <property type="entry name" value="Homeodomain-like"/>
    <property type="match status" value="1"/>
</dbReference>
<dbReference type="PROSITE" id="PS00027">
    <property type="entry name" value="HOMEOBOX_1"/>
    <property type="match status" value="1"/>
</dbReference>
<dbReference type="PROSITE" id="PS50071">
    <property type="entry name" value="HOMEOBOX_2"/>
    <property type="match status" value="1"/>
</dbReference>
<gene>
    <name evidence="4" type="primary">ceh-30</name>
    <name type="ORF">CBG14125</name>
</gene>
<protein>
    <recommendedName>
        <fullName evidence="1">Homeobox protein ceh-30</fullName>
    </recommendedName>
</protein>
<sequence>MSLLDPRQFLLPAFYLDPSTQAFLTQAVSNHKLGTASSFRISDILEPSPNNSTYSHDLDPSPQSVRSDLSTSPRASSPDRNSPMSKKSRKARTIFTDKQLQELENTFEKQKYLSVQDRMDLAHRMGLSDTQVKTWYQNRRTKWKRQATSGMDLLSEPGNLSAVQNLIRSSPYWANYITALPMGGQMGQMPMMGLPMPMIVPPAQHFQATSSSNSPSTHKSSESPQLDVSSNSD</sequence>
<evidence type="ECO:0000250" key="1">
    <source>
        <dbReference type="UniProtKB" id="Q22909"/>
    </source>
</evidence>
<evidence type="ECO:0000255" key="2">
    <source>
        <dbReference type="PROSITE-ProRule" id="PRU00108"/>
    </source>
</evidence>
<evidence type="ECO:0000256" key="3">
    <source>
        <dbReference type="SAM" id="MobiDB-lite"/>
    </source>
</evidence>
<evidence type="ECO:0000312" key="4">
    <source>
        <dbReference type="EMBL" id="CAP32755.1"/>
    </source>
</evidence>
<proteinExistence type="inferred from homology"/>
<name>HM30_CAEBR</name>
<keyword id="KW-0217">Developmental protein</keyword>
<keyword id="KW-0221">Differentiation</keyword>
<keyword id="KW-0238">DNA-binding</keyword>
<keyword id="KW-0371">Homeobox</keyword>
<keyword id="KW-0539">Nucleus</keyword>
<keyword id="KW-1185">Reference proteome</keyword>
<keyword id="KW-0726">Sexual differentiation</keyword>
<keyword id="KW-0804">Transcription</keyword>
<keyword id="KW-0805">Transcription regulation</keyword>
<feature type="chain" id="PRO_0000358601" description="Homeobox protein ceh-30">
    <location>
        <begin position="1"/>
        <end position="233"/>
    </location>
</feature>
<feature type="DNA-binding region" description="Homeobox" evidence="2">
    <location>
        <begin position="88"/>
        <end position="147"/>
    </location>
</feature>
<feature type="region of interest" description="Disordered" evidence="3">
    <location>
        <begin position="50"/>
        <end position="93"/>
    </location>
</feature>
<feature type="region of interest" description="Disordered" evidence="3">
    <location>
        <begin position="206"/>
        <end position="233"/>
    </location>
</feature>
<feature type="compositionally biased region" description="Polar residues" evidence="3">
    <location>
        <begin position="50"/>
        <end position="85"/>
    </location>
</feature>
<feature type="compositionally biased region" description="Polar residues" evidence="3">
    <location>
        <begin position="224"/>
        <end position="233"/>
    </location>
</feature>
<accession>A8XJD0</accession>
<comment type="function">
    <text evidence="1">Cell-type specific anti-apoptotic transcription factor required for the sexually dimorphic survival of the male-specific CEM (cephalic male) sensory neurons during sex determination. In hermaphrodites, the homologous cells undergo programmed cell death due to transcriptional repression of ceh-30 by tra-1, the terminal regulator in the sex determination pathway (By similarity).</text>
</comment>
<comment type="subcellular location">
    <subcellularLocation>
        <location evidence="1 2">Nucleus</location>
    </subcellularLocation>
</comment>